<evidence type="ECO:0000255" key="1">
    <source>
        <dbReference type="HAMAP-Rule" id="MF_04071"/>
    </source>
</evidence>
<keyword id="KW-0106">Calcium</keyword>
<keyword id="KW-1015">Disulfide bond</keyword>
<keyword id="KW-0325">Glycoprotein</keyword>
<keyword id="KW-0326">Glycosidase</keyword>
<keyword id="KW-1032">Host cell membrane</keyword>
<keyword id="KW-1043">Host membrane</keyword>
<keyword id="KW-0378">Hydrolase</keyword>
<keyword id="KW-0472">Membrane</keyword>
<keyword id="KW-0479">Metal-binding</keyword>
<keyword id="KW-0735">Signal-anchor</keyword>
<keyword id="KW-0812">Transmembrane</keyword>
<keyword id="KW-1133">Transmembrane helix</keyword>
<keyword id="KW-0946">Virion</keyword>
<organismHost>
    <name type="scientific">Aves</name>
    <dbReference type="NCBI Taxonomy" id="8782"/>
</organismHost>
<organismHost>
    <name type="scientific">Homo sapiens</name>
    <name type="common">Human</name>
    <dbReference type="NCBI Taxonomy" id="9606"/>
</organismHost>
<organismHost>
    <name type="scientific">Sus scrofa</name>
    <name type="common">Pig</name>
    <dbReference type="NCBI Taxonomy" id="9823"/>
</organismHost>
<dbReference type="EC" id="3.2.1.18" evidence="1"/>
<dbReference type="EMBL" id="CY016238">
    <property type="protein sequence ID" value="ABI95264.1"/>
    <property type="molecule type" value="Other_RNA"/>
</dbReference>
<dbReference type="SMR" id="Q07FI2"/>
<dbReference type="CAZy" id="GH34">
    <property type="family name" value="Glycoside Hydrolase Family 34"/>
</dbReference>
<dbReference type="GlyCosmos" id="Q07FI2">
    <property type="glycosylation" value="9 sites, No reported glycans"/>
</dbReference>
<dbReference type="PRO" id="PR:Q07FI2"/>
<dbReference type="Proteomes" id="UP000008586">
    <property type="component" value="Genome"/>
</dbReference>
<dbReference type="GO" id="GO:0020002">
    <property type="term" value="C:host cell plasma membrane"/>
    <property type="evidence" value="ECO:0007669"/>
    <property type="project" value="UniProtKB-SubCell"/>
</dbReference>
<dbReference type="GO" id="GO:0016020">
    <property type="term" value="C:membrane"/>
    <property type="evidence" value="ECO:0007669"/>
    <property type="project" value="UniProtKB-UniRule"/>
</dbReference>
<dbReference type="GO" id="GO:0055036">
    <property type="term" value="C:virion membrane"/>
    <property type="evidence" value="ECO:0007669"/>
    <property type="project" value="UniProtKB-SubCell"/>
</dbReference>
<dbReference type="GO" id="GO:0004308">
    <property type="term" value="F:exo-alpha-sialidase activity"/>
    <property type="evidence" value="ECO:0007669"/>
    <property type="project" value="UniProtKB-UniRule"/>
</dbReference>
<dbReference type="GO" id="GO:0046872">
    <property type="term" value="F:metal ion binding"/>
    <property type="evidence" value="ECO:0007669"/>
    <property type="project" value="UniProtKB-UniRule"/>
</dbReference>
<dbReference type="GO" id="GO:0005975">
    <property type="term" value="P:carbohydrate metabolic process"/>
    <property type="evidence" value="ECO:0007669"/>
    <property type="project" value="InterPro"/>
</dbReference>
<dbReference type="GO" id="GO:0046761">
    <property type="term" value="P:viral budding from plasma membrane"/>
    <property type="evidence" value="ECO:0007669"/>
    <property type="project" value="UniProtKB-UniRule"/>
</dbReference>
<dbReference type="CDD" id="cd15483">
    <property type="entry name" value="Influenza_NA"/>
    <property type="match status" value="1"/>
</dbReference>
<dbReference type="FunFam" id="2.120.10.10:FF:000001">
    <property type="entry name" value="Neuraminidase"/>
    <property type="match status" value="1"/>
</dbReference>
<dbReference type="Gene3D" id="2.120.10.10">
    <property type="match status" value="1"/>
</dbReference>
<dbReference type="HAMAP" id="MF_04071">
    <property type="entry name" value="INFV_NRAM"/>
    <property type="match status" value="1"/>
</dbReference>
<dbReference type="InterPro" id="IPR001860">
    <property type="entry name" value="Glyco_hydro_34"/>
</dbReference>
<dbReference type="InterPro" id="IPR033654">
    <property type="entry name" value="Sialidase_Influenza_A/B"/>
</dbReference>
<dbReference type="InterPro" id="IPR036278">
    <property type="entry name" value="Sialidase_sf"/>
</dbReference>
<dbReference type="Pfam" id="PF00064">
    <property type="entry name" value="Neur"/>
    <property type="match status" value="1"/>
</dbReference>
<dbReference type="SUPFAM" id="SSF50939">
    <property type="entry name" value="Sialidases"/>
    <property type="match status" value="1"/>
</dbReference>
<sequence length="470" mass="51653">MNPNQKIITIGSISIAIGIISLMLQIGNIISIWASHSIQTGSQNHTGICNQRIITYENSTWVNHTYVNINNTNVVAGKDKTSVTLAGNSSLCSISGWAIYTKDNSIRIGSKGDVFVMREPFISCSHLECRTFFLTQGALLNDKHSNGTVKDRSPYRALMSCPLGEAPSPYNSKFESVAWSASACHDGMGWLTIGISGPDNGAVAVLKYNGIITETIKSWKKRILRTQESECVCVNGSCFTIMTDGPSNGAASYKIFKIEKGKVIKSIELNAPNSHYEECSCYPDTGTVMCVCRDNWHGSNRPWVSFNQNLDYQIGYICSGVFGDNPRPKDGEGSCNPVTVDGADGVKGFSYKYGNGVWIGRTKSNRLRKGFEMIWDPNGWTDTDSDFSVKQDVVAITDWSGYSGSFVQHPELTGLDCIRPCFWVELVRGRPRENTTIWTSGSSISFCGVNSDTANWSWPDGAELPFTIDK</sequence>
<proteinExistence type="inferred from homology"/>
<gene>
    <name evidence="1" type="primary">NA</name>
</gene>
<organism>
    <name type="scientific">Influenza A virus (strain A/China:Nanchang/11/1996 H1N1)</name>
    <dbReference type="NCBI Taxonomy" id="394786"/>
    <lineage>
        <taxon>Viruses</taxon>
        <taxon>Riboviria</taxon>
        <taxon>Orthornavirae</taxon>
        <taxon>Negarnaviricota</taxon>
        <taxon>Polyploviricotina</taxon>
        <taxon>Insthoviricetes</taxon>
        <taxon>Articulavirales</taxon>
        <taxon>Orthomyxoviridae</taxon>
        <taxon>Alphainfluenzavirus</taxon>
        <taxon>Alphainfluenzavirus influenzae</taxon>
        <taxon>Influenza A virus</taxon>
    </lineage>
</organism>
<accession>Q07FI2</accession>
<reference key="1">
    <citation type="submission" date="2006-09" db="EMBL/GenBank/DDBJ databases">
        <title>The NIAID influenza genome sequencing project.</title>
        <authorList>
            <person name="Ghedin E."/>
            <person name="Spiro D."/>
            <person name="Miller N."/>
            <person name="Zaborsky J."/>
            <person name="Feldblyum T."/>
            <person name="Subbu V."/>
            <person name="Shumway M."/>
            <person name="Sparenborg J."/>
            <person name="Groveman L."/>
            <person name="Halpin R."/>
            <person name="Sitz J."/>
            <person name="Koo H."/>
            <person name="Salzberg S.L."/>
            <person name="Webster R.G."/>
            <person name="Hoffmann E."/>
            <person name="Krauss S."/>
            <person name="Naeve C."/>
            <person name="Bao Y."/>
            <person name="Bolotov P."/>
            <person name="Dernovoy D."/>
            <person name="Kiryutin B."/>
            <person name="Lipman D.J."/>
            <person name="Tatusova T."/>
        </authorList>
    </citation>
    <scope>NUCLEOTIDE SEQUENCE [GENOMIC RNA]</scope>
</reference>
<reference key="2">
    <citation type="submission" date="2006-09" db="EMBL/GenBank/DDBJ databases">
        <authorList>
            <consortium name="The NIAID Influenza Genome Sequencing Consortium"/>
        </authorList>
    </citation>
    <scope>NUCLEOTIDE SEQUENCE [GENOMIC RNA]</scope>
</reference>
<comment type="function">
    <text evidence="1">Catalyzes the removal of terminal sialic acid residues from viral and cellular glycoconjugates. Cleaves off the terminal sialic acids on the glycosylated HA during virus budding to facilitate virus release. Additionally helps virus spread through the circulation by further removing sialic acids from the cell surface. These cleavages prevent self-aggregation and ensure the efficient spread of the progeny virus from cell to cell. Otherwise, infection would be limited to one round of replication. Described as a receptor-destroying enzyme because it cleaves a terminal sialic acid from the cellular receptors. May facilitate viral invasion of the upper airways by cleaving the sialic acid moieties on the mucin of the airway epithelial cells. Likely to plays a role in the budding process through its association with lipid rafts during intracellular transport. May additionally display a raft-association independent effect on budding. Plays a role in the determination of host range restriction on replication and virulence. Sialidase activity in late endosome/lysosome traffic seems to enhance virus replication.</text>
</comment>
<comment type="catalytic activity">
    <reaction evidence="1">
        <text>Hydrolysis of alpha-(2-&gt;3)-, alpha-(2-&gt;6)-, alpha-(2-&gt;8)- glycosidic linkages of terminal sialic acid residues in oligosaccharides, glycoproteins, glycolipids, colominic acid and synthetic substrates.</text>
        <dbReference type="EC" id="3.2.1.18"/>
    </reaction>
</comment>
<comment type="cofactor">
    <cofactor evidence="1">
        <name>Ca(2+)</name>
        <dbReference type="ChEBI" id="CHEBI:29108"/>
    </cofactor>
</comment>
<comment type="activity regulation">
    <text evidence="1">Inhibited by the neuraminidase inhibitors zanamivir (Relenza) and oseltamivir (Tamiflu). These drugs interfere with the release of progeny virus from infected cells and are effective against all influenza strains. Resistance to neuraminidase inhibitors is quite rare.</text>
</comment>
<comment type="subunit">
    <text evidence="1">Homotetramer.</text>
</comment>
<comment type="subcellular location">
    <subcellularLocation>
        <location evidence="1">Virion membrane</location>
    </subcellularLocation>
    <subcellularLocation>
        <location evidence="1">Host apical cell membrane</location>
        <topology evidence="1">Single-pass type II membrane protein</topology>
    </subcellularLocation>
    <text evidence="1">Preferentially accumulates at the apical plasma membrane in infected polarized epithelial cells, which is the virus assembly site. Uses lipid rafts for cell surface transport and apical sorting. In the virion, forms a mushroom-shaped spike on the surface of the membrane.</text>
</comment>
<comment type="domain">
    <text evidence="1">Intact N-terminus is essential for virion morphogenesis. Possesses two apical sorting signals, one in the ectodomain, which is likely to be a glycan, and the other in the transmembrane domain. The transmembrane domain also plays a role in lipid raft association.</text>
</comment>
<comment type="PTM">
    <text evidence="1">N-glycosylated.</text>
</comment>
<comment type="miscellaneous">
    <text>The influenza A genome consist of 8 RNA segments. Genetic variation of hemagglutinin and/or neuraminidase genes results in the emergence of new influenza strains. The mechanism of variation can be the result of point mutations or the result of genetic reassortment between segments of two different strains.</text>
</comment>
<comment type="similarity">
    <text evidence="1">Belongs to the glycosyl hydrolase 34 family.</text>
</comment>
<name>NRAM_I96A3</name>
<protein>
    <recommendedName>
        <fullName evidence="1">Neuraminidase</fullName>
        <ecNumber evidence="1">3.2.1.18</ecNumber>
    </recommendedName>
</protein>
<feature type="chain" id="PRO_0000372976" description="Neuraminidase">
    <location>
        <begin position="1"/>
        <end position="470"/>
    </location>
</feature>
<feature type="topological domain" description="Intravirion" evidence="1">
    <location>
        <begin position="1"/>
        <end position="6"/>
    </location>
</feature>
<feature type="transmembrane region" description="Helical" evidence="1">
    <location>
        <begin position="7"/>
        <end position="27"/>
    </location>
</feature>
<feature type="topological domain" description="Virion surface" evidence="1">
    <location>
        <begin position="28"/>
        <end position="470"/>
    </location>
</feature>
<feature type="region of interest" description="Involved in apical transport and lipid raft association" evidence="1">
    <location>
        <begin position="11"/>
        <end position="33"/>
    </location>
</feature>
<feature type="region of interest" description="Hypervariable stalk region" evidence="1">
    <location>
        <begin position="36"/>
        <end position="90"/>
    </location>
</feature>
<feature type="region of interest" description="Head of neuraminidase" evidence="1">
    <location>
        <begin position="91"/>
        <end position="470"/>
    </location>
</feature>
<feature type="active site" description="Proton donor/acceptor" evidence="1">
    <location>
        <position position="151"/>
    </location>
</feature>
<feature type="active site" description="Nucleophile" evidence="1">
    <location>
        <position position="402"/>
    </location>
</feature>
<feature type="binding site" evidence="1">
    <location>
        <position position="118"/>
    </location>
    <ligand>
        <name>substrate</name>
    </ligand>
</feature>
<feature type="binding site" evidence="1">
    <location>
        <position position="152"/>
    </location>
    <ligand>
        <name>substrate</name>
    </ligand>
</feature>
<feature type="binding site" evidence="1">
    <location>
        <begin position="277"/>
        <end position="278"/>
    </location>
    <ligand>
        <name>substrate</name>
    </ligand>
</feature>
<feature type="binding site" evidence="1">
    <location>
        <position position="293"/>
    </location>
    <ligand>
        <name>substrate</name>
    </ligand>
</feature>
<feature type="binding site" evidence="1">
    <location>
        <position position="294"/>
    </location>
    <ligand>
        <name>Ca(2+)</name>
        <dbReference type="ChEBI" id="CHEBI:29108"/>
    </ligand>
</feature>
<feature type="binding site" evidence="1">
    <location>
        <position position="298"/>
    </location>
    <ligand>
        <name>Ca(2+)</name>
        <dbReference type="ChEBI" id="CHEBI:29108"/>
    </ligand>
</feature>
<feature type="binding site" evidence="1">
    <location>
        <position position="324"/>
    </location>
    <ligand>
        <name>Ca(2+)</name>
        <dbReference type="ChEBI" id="CHEBI:29108"/>
    </ligand>
</feature>
<feature type="binding site" evidence="1">
    <location>
        <position position="368"/>
    </location>
    <ligand>
        <name>substrate</name>
    </ligand>
</feature>
<feature type="glycosylation site" description="N-linked (GlcNAc...) asparagine; by host" evidence="1">
    <location>
        <position position="44"/>
    </location>
</feature>
<feature type="glycosylation site" description="N-linked (GlcNAc...) asparagine; by host" evidence="1">
    <location>
        <position position="58"/>
    </location>
</feature>
<feature type="glycosylation site" description="N-linked (GlcNAc...) asparagine; by host" evidence="1">
    <location>
        <position position="63"/>
    </location>
</feature>
<feature type="glycosylation site" description="N-linked (GlcNAc...) asparagine; by host" evidence="1">
    <location>
        <position position="70"/>
    </location>
</feature>
<feature type="glycosylation site" description="N-linked (GlcNAc...) asparagine; by host" evidence="1">
    <location>
        <position position="88"/>
    </location>
</feature>
<feature type="glycosylation site" description="N-linked (GlcNAc...) asparagine; by host" evidence="1">
    <location>
        <position position="146"/>
    </location>
</feature>
<feature type="glycosylation site" description="N-linked (GlcNAc...) asparagine; by host" evidence="1">
    <location>
        <position position="235"/>
    </location>
</feature>
<feature type="glycosylation site" description="N-linked (GlcNAc...) asparagine; by host" evidence="1">
    <location>
        <position position="434"/>
    </location>
</feature>
<feature type="glycosylation site" description="N-linked (GlcNAc...) asparagine; by host" evidence="1">
    <location>
        <position position="455"/>
    </location>
</feature>
<feature type="disulfide bond" evidence="1">
    <location>
        <begin position="92"/>
        <end position="417"/>
    </location>
</feature>
<feature type="disulfide bond" evidence="1">
    <location>
        <begin position="124"/>
        <end position="129"/>
    </location>
</feature>
<feature type="disulfide bond" evidence="1">
    <location>
        <begin position="184"/>
        <end position="231"/>
    </location>
</feature>
<feature type="disulfide bond" evidence="1">
    <location>
        <begin position="233"/>
        <end position="238"/>
    </location>
</feature>
<feature type="disulfide bond" evidence="1">
    <location>
        <begin position="279"/>
        <end position="292"/>
    </location>
</feature>
<feature type="disulfide bond" evidence="1">
    <location>
        <begin position="281"/>
        <end position="290"/>
    </location>
</feature>
<feature type="disulfide bond" evidence="1">
    <location>
        <begin position="318"/>
        <end position="335"/>
    </location>
</feature>
<feature type="disulfide bond" evidence="1">
    <location>
        <begin position="421"/>
        <end position="447"/>
    </location>
</feature>